<keyword id="KW-0067">ATP-binding</keyword>
<keyword id="KW-0238">DNA-binding</keyword>
<keyword id="KW-0378">Hydrolase</keyword>
<keyword id="KW-0460">Magnesium</keyword>
<keyword id="KW-0479">Metal-binding</keyword>
<keyword id="KW-0547">Nucleotide-binding</keyword>
<keyword id="KW-1185">Reference proteome</keyword>
<keyword id="KW-0749">Sporulation</keyword>
<organism>
    <name type="scientific">Halalkalibacterium halodurans (strain ATCC BAA-125 / DSM 18197 / FERM 7344 / JCM 9153 / C-125)</name>
    <name type="common">Bacillus halodurans</name>
    <dbReference type="NCBI Taxonomy" id="272558"/>
    <lineage>
        <taxon>Bacteria</taxon>
        <taxon>Bacillati</taxon>
        <taxon>Bacillota</taxon>
        <taxon>Bacilli</taxon>
        <taxon>Bacillales</taxon>
        <taxon>Bacillaceae</taxon>
        <taxon>Halalkalibacterium (ex Joshi et al. 2022)</taxon>
    </lineage>
</organism>
<protein>
    <recommendedName>
        <fullName evidence="1">Sporulation initiation inhibitor protein Soj</fullName>
        <ecNumber evidence="2">3.6.4.-</ecNumber>
    </recommendedName>
</protein>
<gene>
    <name evidence="3" type="primary">soj</name>
    <name type="ordered locus">BH4058</name>
</gene>
<comment type="function">
    <text evidence="1 2">Inhibits the initiation of sporulation, Spo0J antagonizes this inhibition. Soj ultimately inhibits the activation (phosphorylation) of Spo0A. It is not required for chromosome partitioning (By similarity). ATPase probably involved in chromosome partitioning. Cooperatively binds dsDNA, forming nucleoprotein filaments in a strictly ATP-dependent fashion (By similarity).</text>
</comment>
<comment type="catalytic activity">
    <reaction evidence="2">
        <text>ATP + H2O = ADP + phosphate + H(+)</text>
        <dbReference type="Rhea" id="RHEA:13065"/>
        <dbReference type="ChEBI" id="CHEBI:15377"/>
        <dbReference type="ChEBI" id="CHEBI:15378"/>
        <dbReference type="ChEBI" id="CHEBI:30616"/>
        <dbReference type="ChEBI" id="CHEBI:43474"/>
        <dbReference type="ChEBI" id="CHEBI:456216"/>
    </reaction>
</comment>
<comment type="subunit">
    <text evidence="1 2">Dimerizes in the presence of ATP but not ADP; ATP-binding is required for double-stranded (ds)DNA-binding (By similarity). Interacts with DnaA (By similarity).</text>
</comment>
<comment type="similarity">
    <text evidence="4">Belongs to the ParA family.</text>
</comment>
<dbReference type="EC" id="3.6.4.-" evidence="2"/>
<dbReference type="EMBL" id="BA000004">
    <property type="protein sequence ID" value="BAB07777.1"/>
    <property type="molecule type" value="Genomic_DNA"/>
</dbReference>
<dbReference type="PIR" id="B84157">
    <property type="entry name" value="B84157"/>
</dbReference>
<dbReference type="RefSeq" id="WP_010900182.1">
    <property type="nucleotide sequence ID" value="NC_002570.2"/>
</dbReference>
<dbReference type="SMR" id="Q9K5N0"/>
<dbReference type="STRING" id="272558.gene:10729976"/>
<dbReference type="GeneID" id="87599641"/>
<dbReference type="KEGG" id="bha:BH4058"/>
<dbReference type="eggNOG" id="COG1192">
    <property type="taxonomic scope" value="Bacteria"/>
</dbReference>
<dbReference type="HOGENOM" id="CLU_037612_1_4_9"/>
<dbReference type="OrthoDB" id="9815116at2"/>
<dbReference type="Proteomes" id="UP000001258">
    <property type="component" value="Chromosome"/>
</dbReference>
<dbReference type="GO" id="GO:0005524">
    <property type="term" value="F:ATP binding"/>
    <property type="evidence" value="ECO:0007669"/>
    <property type="project" value="UniProtKB-KW"/>
</dbReference>
<dbReference type="GO" id="GO:0016887">
    <property type="term" value="F:ATP hydrolysis activity"/>
    <property type="evidence" value="ECO:0007669"/>
    <property type="project" value="RHEA"/>
</dbReference>
<dbReference type="GO" id="GO:0030435">
    <property type="term" value="P:sporulation resulting in formation of a cellular spore"/>
    <property type="evidence" value="ECO:0007669"/>
    <property type="project" value="UniProtKB-KW"/>
</dbReference>
<dbReference type="CDD" id="cd02042">
    <property type="entry name" value="ParAB_family"/>
    <property type="match status" value="1"/>
</dbReference>
<dbReference type="FunFam" id="3.40.50.300:FF:000285">
    <property type="entry name" value="Sporulation initiation inhibitor Soj"/>
    <property type="match status" value="1"/>
</dbReference>
<dbReference type="Gene3D" id="3.40.50.300">
    <property type="entry name" value="P-loop containing nucleotide triphosphate hydrolases"/>
    <property type="match status" value="1"/>
</dbReference>
<dbReference type="InterPro" id="IPR025669">
    <property type="entry name" value="AAA_dom"/>
</dbReference>
<dbReference type="InterPro" id="IPR050678">
    <property type="entry name" value="DNA_Partitioning_ATPase"/>
</dbReference>
<dbReference type="InterPro" id="IPR027417">
    <property type="entry name" value="P-loop_NTPase"/>
</dbReference>
<dbReference type="PANTHER" id="PTHR13696">
    <property type="entry name" value="P-LOOP CONTAINING NUCLEOSIDE TRIPHOSPHATE HYDROLASE"/>
    <property type="match status" value="1"/>
</dbReference>
<dbReference type="PANTHER" id="PTHR13696:SF52">
    <property type="entry name" value="PARA FAMILY PROTEIN CT_582"/>
    <property type="match status" value="1"/>
</dbReference>
<dbReference type="Pfam" id="PF13614">
    <property type="entry name" value="AAA_31"/>
    <property type="match status" value="1"/>
</dbReference>
<dbReference type="SUPFAM" id="SSF52540">
    <property type="entry name" value="P-loop containing nucleoside triphosphate hydrolases"/>
    <property type="match status" value="1"/>
</dbReference>
<proteinExistence type="inferred from homology"/>
<feature type="chain" id="PRO_0000201980" description="Sporulation initiation inhibitor protein Soj">
    <location>
        <begin position="1"/>
        <end position="253"/>
    </location>
</feature>
<feature type="binding site" evidence="2">
    <location>
        <position position="11"/>
    </location>
    <ligand>
        <name>ATP</name>
        <dbReference type="ChEBI" id="CHEBI:30616"/>
    </ligand>
</feature>
<feature type="binding site" evidence="2">
    <location>
        <position position="12"/>
    </location>
    <ligand>
        <name>ATP</name>
        <dbReference type="ChEBI" id="CHEBI:30616"/>
    </ligand>
</feature>
<feature type="binding site" evidence="2">
    <location>
        <position position="13"/>
    </location>
    <ligand>
        <name>ATP</name>
        <dbReference type="ChEBI" id="CHEBI:30616"/>
    </ligand>
</feature>
<feature type="binding site" evidence="2">
    <location>
        <position position="14"/>
    </location>
    <ligand>
        <name>ATP</name>
        <dbReference type="ChEBI" id="CHEBI:30616"/>
    </ligand>
</feature>
<feature type="binding site" evidence="2">
    <location>
        <position position="15"/>
    </location>
    <ligand>
        <name>ATP</name>
        <dbReference type="ChEBI" id="CHEBI:30616"/>
    </ligand>
</feature>
<feature type="binding site" evidence="2">
    <location>
        <position position="16"/>
    </location>
    <ligand>
        <name>ATP</name>
        <dbReference type="ChEBI" id="CHEBI:30616"/>
    </ligand>
</feature>
<feature type="binding site" evidence="2">
    <location>
        <position position="17"/>
    </location>
    <ligand>
        <name>ATP</name>
        <dbReference type="ChEBI" id="CHEBI:30616"/>
    </ligand>
</feature>
<feature type="binding site" evidence="2">
    <location>
        <position position="17"/>
    </location>
    <ligand>
        <name>Mg(2+)</name>
        <dbReference type="ChEBI" id="CHEBI:18420"/>
    </ligand>
</feature>
<feature type="binding site" evidence="2">
    <location>
        <position position="18"/>
    </location>
    <ligand>
        <name>ATP</name>
        <dbReference type="ChEBI" id="CHEBI:30616"/>
    </ligand>
</feature>
<feature type="binding site" evidence="2">
    <location>
        <position position="214"/>
    </location>
    <ligand>
        <name>ATP</name>
        <dbReference type="ChEBI" id="CHEBI:30616"/>
    </ligand>
</feature>
<feature type="binding site" evidence="2">
    <location>
        <position position="216"/>
    </location>
    <ligand>
        <name>ATP</name>
        <dbReference type="ChEBI" id="CHEBI:30616"/>
    </ligand>
</feature>
<evidence type="ECO:0000250" key="1">
    <source>
        <dbReference type="UniProtKB" id="P37522"/>
    </source>
</evidence>
<evidence type="ECO:0000250" key="2">
    <source>
        <dbReference type="UniProtKB" id="Q72H90"/>
    </source>
</evidence>
<evidence type="ECO:0000303" key="3">
    <source>
    </source>
</evidence>
<evidence type="ECO:0000305" key="4"/>
<sequence>MAKVISIANQKGGVGKTTTAVNLSACLAHLGQRVLLVDIDPQGNATSGVGIEKGDIDECIYDVLVEDVDTQDVIRTTNMENLDVLPSTIQLSGAEIELVSTISREVRLKRALDQVGRKYDFIFIDCPPSLGLLTINALTASDSVLIPVQCEYYALEGLSQLLNTVRLVQKHLNTDLAIEGVLLTMLDARTNLGIQVIDEVKKYFREKVFDTIIPRNVRLGEAPSHGEPIIRYDAKSRGAEVYLDLAKEVVANG</sequence>
<accession>Q9K5N0</accession>
<name>SOJ_HALH5</name>
<reference key="1">
    <citation type="journal article" date="2000" name="Nucleic Acids Res.">
        <title>Complete genome sequence of the alkaliphilic bacterium Bacillus halodurans and genomic sequence comparison with Bacillus subtilis.</title>
        <authorList>
            <person name="Takami H."/>
            <person name="Nakasone K."/>
            <person name="Takaki Y."/>
            <person name="Maeno G."/>
            <person name="Sasaki R."/>
            <person name="Masui N."/>
            <person name="Fuji F."/>
            <person name="Hirama C."/>
            <person name="Nakamura Y."/>
            <person name="Ogasawara N."/>
            <person name="Kuhara S."/>
            <person name="Horikoshi K."/>
        </authorList>
    </citation>
    <scope>NUCLEOTIDE SEQUENCE [LARGE SCALE GENOMIC DNA]</scope>
    <source>
        <strain>ATCC BAA-125 / DSM 18197 / FERM 7344 / JCM 9153 / C-125</strain>
    </source>
</reference>